<organism>
    <name type="scientific">Aeropyrum pernix (strain ATCC 700893 / DSM 11879 / JCM 9820 / NBRC 100138 / K1)</name>
    <dbReference type="NCBI Taxonomy" id="272557"/>
    <lineage>
        <taxon>Archaea</taxon>
        <taxon>Thermoproteota</taxon>
        <taxon>Thermoprotei</taxon>
        <taxon>Desulfurococcales</taxon>
        <taxon>Desulfurococcaceae</taxon>
        <taxon>Aeropyrum</taxon>
    </lineage>
</organism>
<gene>
    <name type="primary">apeI</name>
    <name type="ordered locus">APE_1929.1</name>
</gene>
<proteinExistence type="evidence at protein level"/>
<reference key="1">
    <citation type="journal article" date="1998" name="J. Bacteriol.">
        <title>Molecular characterization and postsplicing fate of three introns within the single rRNA operon of the hyperthermophilic archaeon Aeropyrum pernix K1.</title>
        <authorList>
            <person name="Nomura N."/>
            <person name="Sako Y."/>
            <person name="Uchida A."/>
        </authorList>
    </citation>
    <scope>NUCLEOTIDE SEQUENCE [GENOMIC DNA]</scope>
    <source>
        <strain>ATCC 700893 / DSM 11879 / JCM 9820 / NBRC 100138 / K1</strain>
    </source>
</reference>
<reference key="2">
    <citation type="submission" date="2005-06" db="EMBL/GenBank/DDBJ databases">
        <authorList>
            <person name="Nomura N."/>
        </authorList>
    </citation>
    <scope>SEQUENCE REVISION</scope>
</reference>
<reference key="3">
    <citation type="journal article" date="1999" name="DNA Res.">
        <title>Complete genome sequence of an aerobic hyper-thermophilic crenarchaeon, Aeropyrum pernix K1.</title>
        <authorList>
            <person name="Kawarabayasi Y."/>
            <person name="Hino Y."/>
            <person name="Horikawa H."/>
            <person name="Yamazaki S."/>
            <person name="Haikawa Y."/>
            <person name="Jin-no K."/>
            <person name="Takahashi M."/>
            <person name="Sekine M."/>
            <person name="Baba S."/>
            <person name="Ankai A."/>
            <person name="Kosugi H."/>
            <person name="Hosoyama A."/>
            <person name="Fukui S."/>
            <person name="Nagai Y."/>
            <person name="Nishijima K."/>
            <person name="Nakazawa H."/>
            <person name="Takamiya M."/>
            <person name="Masuda S."/>
            <person name="Funahashi T."/>
            <person name="Tanaka T."/>
            <person name="Kudoh Y."/>
            <person name="Yamazaki J."/>
            <person name="Kushida N."/>
            <person name="Oguchi A."/>
            <person name="Aoki K."/>
            <person name="Kubota K."/>
            <person name="Nakamura Y."/>
            <person name="Nomura N."/>
            <person name="Sako Y."/>
            <person name="Kikuchi H."/>
        </authorList>
    </citation>
    <scope>NUCLEOTIDE SEQUENCE [LARGE SCALE GENOMIC DNA]</scope>
    <source>
        <strain>ATCC 700893 / DSM 11879 / JCM 9820 / NBRC 100138 / K1</strain>
    </source>
</reference>
<reference key="4">
    <citation type="journal article" date="2005" name="Nucleic Acids Res.">
        <title>I-ApeI: a novel intron-encoded LAGLIDADG homing endonuclease from the archaeon, Aeropyrum pernix K1.</title>
        <authorList>
            <person name="Nomura N."/>
            <person name="Morinaga Y."/>
            <person name="Shirai N."/>
            <person name="Sako Y."/>
        </authorList>
    </citation>
    <scope>CHARACTERIZATION</scope>
    <source>
        <strain>ATCC 700893 / DSM 11879 / JCM 9820 / NBRC 100138 / K1</strain>
    </source>
</reference>
<feature type="chain" id="PRO_0000192789" description="Homing endonuclease I-ApeI">
    <location>
        <begin position="1"/>
        <end position="222"/>
    </location>
</feature>
<comment type="function">
    <text>Endonuclease involved in 16S rRNA intron I-alpha homing. Recognizes the minimal target 5'-GCAAGGCTGAAACTTAAAGG-3'; generates 4 base 3' protruding ends 5'-AAAC-3' and 5'-GTTT-3'.</text>
</comment>
<comment type="cofactor">
    <cofactor>
        <name>Mg(2+)</name>
        <dbReference type="ChEBI" id="CHEBI:18420"/>
    </cofactor>
    <cofactor>
        <name>Mn(2+)</name>
        <dbReference type="ChEBI" id="CHEBI:29035"/>
    </cofactor>
    <text>1-5 mM manganese gives higher cleavage activity than the same concentration of magnesium.</text>
</comment>
<comment type="biophysicochemical properties">
    <phDependence>
        <text>Optimum pH is 7.5.</text>
    </phDependence>
    <temperatureDependence>
        <text>Optimum temperature is 90 degrees Celsius. Active from 70 to 90 degrees Celsius.</text>
    </temperatureDependence>
</comment>
<comment type="subunit">
    <text>Probably functions as a monomer.</text>
</comment>
<accession>O73942</accession>
<name>APE1_AERPE</name>
<keyword id="KW-0255">Endonuclease</keyword>
<keyword id="KW-0378">Hydrolase</keyword>
<keyword id="KW-0404">Intron homing</keyword>
<keyword id="KW-0540">Nuclease</keyword>
<keyword id="KW-1185">Reference proteome</keyword>
<protein>
    <recommendedName>
        <fullName>Homing endonuclease I-ApeI</fullName>
        <ecNumber>3.1.-.-</ecNumber>
    </recommendedName>
    <alternativeName>
        <fullName>rRNA intron-encoded homing endonuclease 1</fullName>
    </alternativeName>
</protein>
<sequence>MDGYALFYLVGALRDGSVYRYSRNYYVIWYSSNKDYLERVIVSKLRILGFHNVRVYQYKRGAYRVRISSKQLFHILVNQFEHPLSTSSRKTPWPTPQRVKDGPLALQIEYVKGFVDAEGSVIKSSKGVQVDVSQQIMEPLKFLAQVLEKVGVKVTGIYLGSDGVWRLRIASLASLRRFAHYIGFRHPCKSKKLNELLGRPLPGPSKLKGIGGGAPQGVEPAA</sequence>
<dbReference type="EC" id="3.1.-.-"/>
<dbReference type="EMBL" id="AB008745">
    <property type="protein sequence ID" value="BAA31987.2"/>
    <property type="molecule type" value="Genomic_DNA"/>
</dbReference>
<dbReference type="EMBL" id="BA000002">
    <property type="protein sequence ID" value="BAA80936.2"/>
    <property type="molecule type" value="Genomic_DNA"/>
</dbReference>
<dbReference type="PIR" id="C72581">
    <property type="entry name" value="C72581"/>
</dbReference>
<dbReference type="SMR" id="O73942"/>
<dbReference type="EnsemblBacteria" id="BAA80936">
    <property type="protein sequence ID" value="BAA80936"/>
    <property type="gene ID" value="APE_1929.1"/>
</dbReference>
<dbReference type="KEGG" id="ape:APE_1929.1"/>
<dbReference type="eggNOG" id="arCOG03156">
    <property type="taxonomic scope" value="Archaea"/>
</dbReference>
<dbReference type="Proteomes" id="UP000002518">
    <property type="component" value="Chromosome"/>
</dbReference>
<dbReference type="GO" id="GO:0004519">
    <property type="term" value="F:endonuclease activity"/>
    <property type="evidence" value="ECO:0007669"/>
    <property type="project" value="UniProtKB-KW"/>
</dbReference>
<dbReference type="GO" id="GO:0006314">
    <property type="term" value="P:intron homing"/>
    <property type="evidence" value="ECO:0007669"/>
    <property type="project" value="UniProtKB-KW"/>
</dbReference>
<dbReference type="Gene3D" id="3.10.28.10">
    <property type="entry name" value="Homing endonucleases"/>
    <property type="match status" value="1"/>
</dbReference>
<dbReference type="InterPro" id="IPR027434">
    <property type="entry name" value="Homing_endonucl"/>
</dbReference>
<dbReference type="InterPro" id="IPR004860">
    <property type="entry name" value="LAGLIDADG_dom"/>
</dbReference>
<dbReference type="Pfam" id="PF14528">
    <property type="entry name" value="LAGLIDADG_3"/>
    <property type="match status" value="1"/>
</dbReference>
<dbReference type="SUPFAM" id="SSF55608">
    <property type="entry name" value="Homing endonucleases"/>
    <property type="match status" value="2"/>
</dbReference>